<dbReference type="EMBL" id="CT573326">
    <property type="protein sequence ID" value="CAK14612.1"/>
    <property type="molecule type" value="Genomic_DNA"/>
</dbReference>
<dbReference type="RefSeq" id="WP_011533021.1">
    <property type="nucleotide sequence ID" value="NC_008027.1"/>
</dbReference>
<dbReference type="SMR" id="Q1ICK1"/>
<dbReference type="STRING" id="384676.PSEEN1768"/>
<dbReference type="GeneID" id="32805004"/>
<dbReference type="KEGG" id="pen:PSEEN1768"/>
<dbReference type="eggNOG" id="COG3115">
    <property type="taxonomic scope" value="Bacteria"/>
</dbReference>
<dbReference type="HOGENOM" id="CLU_030174_0_1_6"/>
<dbReference type="OrthoDB" id="7054914at2"/>
<dbReference type="Proteomes" id="UP000000658">
    <property type="component" value="Chromosome"/>
</dbReference>
<dbReference type="GO" id="GO:0032153">
    <property type="term" value="C:cell division site"/>
    <property type="evidence" value="ECO:0007669"/>
    <property type="project" value="UniProtKB-UniRule"/>
</dbReference>
<dbReference type="GO" id="GO:0005886">
    <property type="term" value="C:plasma membrane"/>
    <property type="evidence" value="ECO:0007669"/>
    <property type="project" value="UniProtKB-SubCell"/>
</dbReference>
<dbReference type="GO" id="GO:0000917">
    <property type="term" value="P:division septum assembly"/>
    <property type="evidence" value="ECO:0007669"/>
    <property type="project" value="TreeGrafter"/>
</dbReference>
<dbReference type="GO" id="GO:0043093">
    <property type="term" value="P:FtsZ-dependent cytokinesis"/>
    <property type="evidence" value="ECO:0007669"/>
    <property type="project" value="UniProtKB-UniRule"/>
</dbReference>
<dbReference type="Gene3D" id="3.30.1400.10">
    <property type="entry name" value="ZipA, C-terminal FtsZ-binding domain"/>
    <property type="match status" value="1"/>
</dbReference>
<dbReference type="HAMAP" id="MF_00509">
    <property type="entry name" value="ZipA"/>
    <property type="match status" value="1"/>
</dbReference>
<dbReference type="InterPro" id="IPR011919">
    <property type="entry name" value="Cell_div_ZipA"/>
</dbReference>
<dbReference type="InterPro" id="IPR007449">
    <property type="entry name" value="ZipA_FtsZ-bd_C"/>
</dbReference>
<dbReference type="InterPro" id="IPR036765">
    <property type="entry name" value="ZipA_FtsZ-bd_C_sf"/>
</dbReference>
<dbReference type="NCBIfam" id="TIGR02205">
    <property type="entry name" value="septum_zipA"/>
    <property type="match status" value="1"/>
</dbReference>
<dbReference type="PANTHER" id="PTHR38685">
    <property type="entry name" value="CELL DIVISION PROTEIN ZIPA"/>
    <property type="match status" value="1"/>
</dbReference>
<dbReference type="PANTHER" id="PTHR38685:SF1">
    <property type="entry name" value="CELL DIVISION PROTEIN ZIPA"/>
    <property type="match status" value="1"/>
</dbReference>
<dbReference type="Pfam" id="PF04354">
    <property type="entry name" value="ZipA_C"/>
    <property type="match status" value="1"/>
</dbReference>
<dbReference type="SMART" id="SM00771">
    <property type="entry name" value="ZipA_C"/>
    <property type="match status" value="1"/>
</dbReference>
<dbReference type="SUPFAM" id="SSF64383">
    <property type="entry name" value="Cell-division protein ZipA, C-terminal domain"/>
    <property type="match status" value="1"/>
</dbReference>
<reference key="1">
    <citation type="journal article" date="2006" name="Nat. Biotechnol.">
        <title>Complete genome sequence of the entomopathogenic and metabolically versatile soil bacterium Pseudomonas entomophila.</title>
        <authorList>
            <person name="Vodovar N."/>
            <person name="Vallenet D."/>
            <person name="Cruveiller S."/>
            <person name="Rouy Z."/>
            <person name="Barbe V."/>
            <person name="Acosta C."/>
            <person name="Cattolico L."/>
            <person name="Jubin C."/>
            <person name="Lajus A."/>
            <person name="Segurens B."/>
            <person name="Vacherie B."/>
            <person name="Wincker P."/>
            <person name="Weissenbach J."/>
            <person name="Lemaitre B."/>
            <person name="Medigue C."/>
            <person name="Boccard F."/>
        </authorList>
    </citation>
    <scope>NUCLEOTIDE SEQUENCE [LARGE SCALE GENOMIC DNA]</scope>
    <source>
        <strain>L48</strain>
    </source>
</reference>
<gene>
    <name evidence="1" type="primary">zipA</name>
    <name type="ordered locus">PSEEN1768</name>
</gene>
<keyword id="KW-0131">Cell cycle</keyword>
<keyword id="KW-0132">Cell division</keyword>
<keyword id="KW-0997">Cell inner membrane</keyword>
<keyword id="KW-1003">Cell membrane</keyword>
<keyword id="KW-0472">Membrane</keyword>
<keyword id="KW-0812">Transmembrane</keyword>
<keyword id="KW-1133">Transmembrane helix</keyword>
<accession>Q1ICK1</accession>
<name>ZIPA_PSEE4</name>
<feature type="chain" id="PRO_1000015148" description="Cell division protein ZipA">
    <location>
        <begin position="1"/>
        <end position="294"/>
    </location>
</feature>
<feature type="topological domain" description="Periplasmic" evidence="1">
    <location>
        <position position="1"/>
    </location>
</feature>
<feature type="transmembrane region" description="Helical" evidence="1">
    <location>
        <begin position="2"/>
        <end position="22"/>
    </location>
</feature>
<feature type="topological domain" description="Cytoplasmic" evidence="1">
    <location>
        <begin position="23"/>
        <end position="294"/>
    </location>
</feature>
<feature type="region of interest" description="Disordered" evidence="2">
    <location>
        <begin position="64"/>
        <end position="111"/>
    </location>
</feature>
<feature type="region of interest" description="Disordered" evidence="2">
    <location>
        <begin position="126"/>
        <end position="146"/>
    </location>
</feature>
<feature type="compositionally biased region" description="Basic and acidic residues" evidence="2">
    <location>
        <begin position="82"/>
        <end position="91"/>
    </location>
</feature>
<evidence type="ECO:0000255" key="1">
    <source>
        <dbReference type="HAMAP-Rule" id="MF_00509"/>
    </source>
</evidence>
<evidence type="ECO:0000256" key="2">
    <source>
        <dbReference type="SAM" id="MobiDB-lite"/>
    </source>
</evidence>
<sequence length="294" mass="32708">MEIGLREWLILIGIIVIAGILFDGWRRMRGGKGKLKFRLDRSYANAPDDEGGAEVLGPSRVLETHKEPELDESDLPSVSAPARERERDPKPAKASKRGKRNHSEPQQGDLNLAAEAREPDLFADDKDDFVADNNRHGAAATPSTPVKELPPAEEVLVISVISRDEGGFKGPALLQNILESGLRFGEMDIFHRHESMAGHGEVLFSMANAVKPGVFDLDDIDHFSTRAVSFFLGLPGPRHPKQAFDVMVAAARKLAHELDGELKDDQRSVLTAQTIEHYRQRIVEFERRALTQKR</sequence>
<protein>
    <recommendedName>
        <fullName evidence="1">Cell division protein ZipA</fullName>
    </recommendedName>
</protein>
<comment type="function">
    <text evidence="1">Essential cell division protein that stabilizes the FtsZ protofilaments by cross-linking them and that serves as a cytoplasmic membrane anchor for the Z ring. Also required for the recruitment to the septal ring of downstream cell division proteins.</text>
</comment>
<comment type="subunit">
    <text evidence="1">Interacts with FtsZ via their C-terminal domains.</text>
</comment>
<comment type="subcellular location">
    <subcellularLocation>
        <location evidence="1">Cell inner membrane</location>
        <topology evidence="1">Single-pass type I membrane protein</topology>
    </subcellularLocation>
    <text evidence="1">Localizes to the Z ring in an FtsZ-dependent manner.</text>
</comment>
<comment type="similarity">
    <text evidence="1">Belongs to the ZipA family.</text>
</comment>
<organism>
    <name type="scientific">Pseudomonas entomophila (strain L48)</name>
    <dbReference type="NCBI Taxonomy" id="384676"/>
    <lineage>
        <taxon>Bacteria</taxon>
        <taxon>Pseudomonadati</taxon>
        <taxon>Pseudomonadota</taxon>
        <taxon>Gammaproteobacteria</taxon>
        <taxon>Pseudomonadales</taxon>
        <taxon>Pseudomonadaceae</taxon>
        <taxon>Pseudomonas</taxon>
    </lineage>
</organism>
<proteinExistence type="inferred from homology"/>